<name>YDIO_BACSU</name>
<keyword id="KW-0238">DNA-binding</keyword>
<keyword id="KW-0489">Methyltransferase</keyword>
<keyword id="KW-1185">Reference proteome</keyword>
<keyword id="KW-0680">Restriction system</keyword>
<keyword id="KW-0949">S-adenosyl-L-methionine</keyword>
<keyword id="KW-0808">Transferase</keyword>
<dbReference type="EC" id="2.1.1.37"/>
<dbReference type="EMBL" id="AB007637">
    <property type="protein sequence ID" value="BAA22750.1"/>
    <property type="molecule type" value="Genomic_DNA"/>
</dbReference>
<dbReference type="EMBL" id="AL009126">
    <property type="protein sequence ID" value="CAB12425.1"/>
    <property type="molecule type" value="Genomic_DNA"/>
</dbReference>
<dbReference type="PIR" id="H69787">
    <property type="entry name" value="H69787"/>
</dbReference>
<dbReference type="RefSeq" id="WP_003234063.1">
    <property type="nucleotide sequence ID" value="NZ_OZ025638.1"/>
</dbReference>
<dbReference type="SMR" id="O34939"/>
<dbReference type="FunCoup" id="O34939">
    <property type="interactions" value="71"/>
</dbReference>
<dbReference type="STRING" id="224308.BSU06060"/>
<dbReference type="REBASE" id="152644">
    <property type="entry name" value="M.Rsp1314ORF3887P"/>
</dbReference>
<dbReference type="REBASE" id="152717">
    <property type="entry name" value="M.Rsp731ORF3889P"/>
</dbReference>
<dbReference type="REBASE" id="156237">
    <property type="entry name" value="M1.Bsu16045ORF661P"/>
</dbReference>
<dbReference type="REBASE" id="3612">
    <property type="entry name" value="M1.BsuMI"/>
</dbReference>
<dbReference type="PaxDb" id="224308-BSU06060"/>
<dbReference type="EnsemblBacteria" id="CAB12425">
    <property type="protein sequence ID" value="CAB12425"/>
    <property type="gene ID" value="BSU_06060"/>
</dbReference>
<dbReference type="GeneID" id="939892"/>
<dbReference type="KEGG" id="bsu:BSU06060"/>
<dbReference type="PATRIC" id="fig|224308.179.peg.655"/>
<dbReference type="eggNOG" id="COG0270">
    <property type="taxonomic scope" value="Bacteria"/>
</dbReference>
<dbReference type="InParanoid" id="O34939"/>
<dbReference type="OrthoDB" id="9813719at2"/>
<dbReference type="PhylomeDB" id="O34939"/>
<dbReference type="BioCyc" id="BSUB:BSU06060-MONOMER"/>
<dbReference type="PRO" id="PR:O34939"/>
<dbReference type="Proteomes" id="UP000001570">
    <property type="component" value="Chromosome"/>
</dbReference>
<dbReference type="GO" id="GO:0003886">
    <property type="term" value="F:DNA (cytosine-5-)-methyltransferase activity"/>
    <property type="evidence" value="ECO:0007669"/>
    <property type="project" value="UniProtKB-EC"/>
</dbReference>
<dbReference type="GO" id="GO:0003677">
    <property type="term" value="F:DNA binding"/>
    <property type="evidence" value="ECO:0007669"/>
    <property type="project" value="UniProtKB-KW"/>
</dbReference>
<dbReference type="GO" id="GO:0009007">
    <property type="term" value="F:site-specific DNA-methyltransferase (adenine-specific) activity"/>
    <property type="evidence" value="ECO:0000303"/>
    <property type="project" value="UniProtKB"/>
</dbReference>
<dbReference type="GO" id="GO:0009307">
    <property type="term" value="P:DNA restriction-modification system"/>
    <property type="evidence" value="ECO:0000315"/>
    <property type="project" value="UniProtKB"/>
</dbReference>
<dbReference type="GO" id="GO:0032259">
    <property type="term" value="P:methylation"/>
    <property type="evidence" value="ECO:0007669"/>
    <property type="project" value="UniProtKB-KW"/>
</dbReference>
<dbReference type="Gene3D" id="3.90.120.10">
    <property type="entry name" value="DNA Methylase, subunit A, domain 2"/>
    <property type="match status" value="1"/>
</dbReference>
<dbReference type="Gene3D" id="3.40.50.150">
    <property type="entry name" value="Vaccinia Virus protein VP39"/>
    <property type="match status" value="1"/>
</dbReference>
<dbReference type="InterPro" id="IPR050390">
    <property type="entry name" value="C5-Methyltransferase"/>
</dbReference>
<dbReference type="InterPro" id="IPR001525">
    <property type="entry name" value="C5_MeTfrase"/>
</dbReference>
<dbReference type="InterPro" id="IPR029063">
    <property type="entry name" value="SAM-dependent_MTases_sf"/>
</dbReference>
<dbReference type="NCBIfam" id="TIGR00675">
    <property type="entry name" value="dcm"/>
    <property type="match status" value="1"/>
</dbReference>
<dbReference type="PANTHER" id="PTHR10629">
    <property type="entry name" value="CYTOSINE-SPECIFIC METHYLTRANSFERASE"/>
    <property type="match status" value="1"/>
</dbReference>
<dbReference type="PANTHER" id="PTHR10629:SF52">
    <property type="entry name" value="DNA (CYTOSINE-5)-METHYLTRANSFERASE 1"/>
    <property type="match status" value="1"/>
</dbReference>
<dbReference type="Pfam" id="PF00145">
    <property type="entry name" value="DNA_methylase"/>
    <property type="match status" value="1"/>
</dbReference>
<dbReference type="PRINTS" id="PR00105">
    <property type="entry name" value="C5METTRFRASE"/>
</dbReference>
<dbReference type="SUPFAM" id="SSF53335">
    <property type="entry name" value="S-adenosyl-L-methionine-dependent methyltransferases"/>
    <property type="match status" value="1"/>
</dbReference>
<dbReference type="PROSITE" id="PS51679">
    <property type="entry name" value="SAM_MT_C5"/>
    <property type="match status" value="1"/>
</dbReference>
<organism>
    <name type="scientific">Bacillus subtilis (strain 168)</name>
    <dbReference type="NCBI Taxonomy" id="224308"/>
    <lineage>
        <taxon>Bacteria</taxon>
        <taxon>Bacillati</taxon>
        <taxon>Bacillota</taxon>
        <taxon>Bacilli</taxon>
        <taxon>Bacillales</taxon>
        <taxon>Bacillaceae</taxon>
        <taxon>Bacillus</taxon>
    </lineage>
</organism>
<sequence>MTNFILNENKQLSLAIEDENIENFYIDGTDLVRKIIRRSGSGVTSRVPVLSTQDLENKNLHELYDESWLRMKNRPNTELTTESINIADLFSGCGGLSLGVWEACRALGINPRFSFACDLNEAALSVYEKNFSPDFSLNESIEKHINGELGAPLTVEEQRIKDKVKKIDFILAGPPCQGHSDLNNHTRRKDPRNALLMRVSRVIELFQPSSVLVENVPGIIHDKSGSFKEFKNHLKTQGYYFDEIVLNAEKLGVSQARRRYFIFASKTPVSSLNQINEFYSTNSRPISWAISDLVENVGDDIFNTASEHSLENKRRIEYLFENNLFELPNSERPDCHRLKPHSYKSVYGRMYWDRPAPTITRGFGSTGQGRFVHSLLKRTITPHEAARIQFFPDFFNFGDLRRRQYQDVIGNAVPSKLSYLLALHQLR</sequence>
<accession>O34939</accession>
<accession>Q797D1</accession>
<evidence type="ECO:0000255" key="1">
    <source>
        <dbReference type="PROSITE-ProRule" id="PRU01016"/>
    </source>
</evidence>
<evidence type="ECO:0000269" key="2">
    <source>
    </source>
</evidence>
<evidence type="ECO:0000269" key="3">
    <source>
    </source>
</evidence>
<evidence type="ECO:0000269" key="4">
    <source>
    </source>
</evidence>
<evidence type="ECO:0000303" key="5">
    <source>
    </source>
</evidence>
<evidence type="ECO:0000305" key="6">
    <source>
    </source>
</evidence>
<evidence type="ECO:0000305" key="7">
    <source>
    </source>
</evidence>
<reference key="1">
    <citation type="journal article" date="1997" name="DNA Res.">
        <title>Sequence analysis of the groESL-cotA region of the Bacillus subtilis genome, containing the restriction/modification system genes.</title>
        <authorList>
            <person name="Kasahara Y."/>
            <person name="Nakai S."/>
            <person name="Ogasawara N."/>
            <person name="Yata K."/>
            <person name="Sadaie Y."/>
        </authorList>
    </citation>
    <scope>NUCLEOTIDE SEQUENCE [GENOMIC DNA]</scope>
    <source>
        <strain>168 / Marburg / ATCC 6051 / DSM 10 / JCM 1465 / NBRC 13719 / NCIMB 3610 / NRRL NRS-744 / VKM B-501</strain>
    </source>
</reference>
<reference key="2">
    <citation type="journal article" date="1997" name="Nature">
        <title>The complete genome sequence of the Gram-positive bacterium Bacillus subtilis.</title>
        <authorList>
            <person name="Kunst F."/>
            <person name="Ogasawara N."/>
            <person name="Moszer I."/>
            <person name="Albertini A.M."/>
            <person name="Alloni G."/>
            <person name="Azevedo V."/>
            <person name="Bertero M.G."/>
            <person name="Bessieres P."/>
            <person name="Bolotin A."/>
            <person name="Borchert S."/>
            <person name="Borriss R."/>
            <person name="Boursier L."/>
            <person name="Brans A."/>
            <person name="Braun M."/>
            <person name="Brignell S.C."/>
            <person name="Bron S."/>
            <person name="Brouillet S."/>
            <person name="Bruschi C.V."/>
            <person name="Caldwell B."/>
            <person name="Capuano V."/>
            <person name="Carter N.M."/>
            <person name="Choi S.-K."/>
            <person name="Codani J.-J."/>
            <person name="Connerton I.F."/>
            <person name="Cummings N.J."/>
            <person name="Daniel R.A."/>
            <person name="Denizot F."/>
            <person name="Devine K.M."/>
            <person name="Duesterhoeft A."/>
            <person name="Ehrlich S.D."/>
            <person name="Emmerson P.T."/>
            <person name="Entian K.-D."/>
            <person name="Errington J."/>
            <person name="Fabret C."/>
            <person name="Ferrari E."/>
            <person name="Foulger D."/>
            <person name="Fritz C."/>
            <person name="Fujita M."/>
            <person name="Fujita Y."/>
            <person name="Fuma S."/>
            <person name="Galizzi A."/>
            <person name="Galleron N."/>
            <person name="Ghim S.-Y."/>
            <person name="Glaser P."/>
            <person name="Goffeau A."/>
            <person name="Golightly E.J."/>
            <person name="Grandi G."/>
            <person name="Guiseppi G."/>
            <person name="Guy B.J."/>
            <person name="Haga K."/>
            <person name="Haiech J."/>
            <person name="Harwood C.R."/>
            <person name="Henaut A."/>
            <person name="Hilbert H."/>
            <person name="Holsappel S."/>
            <person name="Hosono S."/>
            <person name="Hullo M.-F."/>
            <person name="Itaya M."/>
            <person name="Jones L.-M."/>
            <person name="Joris B."/>
            <person name="Karamata D."/>
            <person name="Kasahara Y."/>
            <person name="Klaerr-Blanchard M."/>
            <person name="Klein C."/>
            <person name="Kobayashi Y."/>
            <person name="Koetter P."/>
            <person name="Koningstein G."/>
            <person name="Krogh S."/>
            <person name="Kumano M."/>
            <person name="Kurita K."/>
            <person name="Lapidus A."/>
            <person name="Lardinois S."/>
            <person name="Lauber J."/>
            <person name="Lazarevic V."/>
            <person name="Lee S.-M."/>
            <person name="Levine A."/>
            <person name="Liu H."/>
            <person name="Masuda S."/>
            <person name="Mauel C."/>
            <person name="Medigue C."/>
            <person name="Medina N."/>
            <person name="Mellado R.P."/>
            <person name="Mizuno M."/>
            <person name="Moestl D."/>
            <person name="Nakai S."/>
            <person name="Noback M."/>
            <person name="Noone D."/>
            <person name="O'Reilly M."/>
            <person name="Ogawa K."/>
            <person name="Ogiwara A."/>
            <person name="Oudega B."/>
            <person name="Park S.-H."/>
            <person name="Parro V."/>
            <person name="Pohl T.M."/>
            <person name="Portetelle D."/>
            <person name="Porwollik S."/>
            <person name="Prescott A.M."/>
            <person name="Presecan E."/>
            <person name="Pujic P."/>
            <person name="Purnelle B."/>
            <person name="Rapoport G."/>
            <person name="Rey M."/>
            <person name="Reynolds S."/>
            <person name="Rieger M."/>
            <person name="Rivolta C."/>
            <person name="Rocha E."/>
            <person name="Roche B."/>
            <person name="Rose M."/>
            <person name="Sadaie Y."/>
            <person name="Sato T."/>
            <person name="Scanlan E."/>
            <person name="Schleich S."/>
            <person name="Schroeter R."/>
            <person name="Scoffone F."/>
            <person name="Sekiguchi J."/>
            <person name="Sekowska A."/>
            <person name="Seror S.J."/>
            <person name="Serror P."/>
            <person name="Shin B.-S."/>
            <person name="Soldo B."/>
            <person name="Sorokin A."/>
            <person name="Tacconi E."/>
            <person name="Takagi T."/>
            <person name="Takahashi H."/>
            <person name="Takemaru K."/>
            <person name="Takeuchi M."/>
            <person name="Tamakoshi A."/>
            <person name="Tanaka T."/>
            <person name="Terpstra P."/>
            <person name="Tognoni A."/>
            <person name="Tosato V."/>
            <person name="Uchiyama S."/>
            <person name="Vandenbol M."/>
            <person name="Vannier F."/>
            <person name="Vassarotti A."/>
            <person name="Viari A."/>
            <person name="Wambutt R."/>
            <person name="Wedler E."/>
            <person name="Wedler H."/>
            <person name="Weitzenegger T."/>
            <person name="Winters P."/>
            <person name="Wipat A."/>
            <person name="Yamamoto H."/>
            <person name="Yamane K."/>
            <person name="Yasumoto K."/>
            <person name="Yata K."/>
            <person name="Yoshida K."/>
            <person name="Yoshikawa H.-F."/>
            <person name="Zumstein E."/>
            <person name="Yoshikawa H."/>
            <person name="Danchin A."/>
        </authorList>
    </citation>
    <scope>NUCLEOTIDE SEQUENCE [LARGE SCALE GENOMIC DNA]</scope>
    <source>
        <strain>168</strain>
    </source>
</reference>
<reference key="3">
    <citation type="journal article" date="1988" name="Gene">
        <title>DNA methyltransferase of Bacillus subtilis Marburg: purification, properties and further evidence of specificity.</title>
        <authorList>
            <person name="Guha S."/>
        </authorList>
    </citation>
    <scope>FUNCTION</scope>
    <scope>ACTIVITY REGULATION</scope>
    <scope>BIOPHYSICOCHEMICAL PROPERTIES</scope>
    <scope>SUBUNIT</scope>
    <source>
        <strain>168 / Marburg / ATCC 6051 / DSM 10 / JCM 1465 / NBRC 13719 / NCIMB 3610 / NRRL NRS-744 / VKM B-501</strain>
    </source>
</reference>
<reference key="4">
    <citation type="journal article" date="1988" name="Mol. Gen. Genet.">
        <title>Restriction and modification in Bacillus subtilis Marburg 168: target sites and effects on plasmid transformation.</title>
        <authorList>
            <person name="Bron S."/>
            <person name="Janniere L."/>
            <person name="Ehrlich S.D."/>
        </authorList>
    </citation>
    <scope>DNA TARGET SEQUENCE</scope>
    <source>
        <strain>168 / Marburg / ATCC 6051 / DSM 10 / JCM 1465 / NBRC 13719 / NCIMB 3610 / NRRL NRS-744 / VKM B-501</strain>
    </source>
</reference>
<reference key="5">
    <citation type="journal article" date="2002" name="J. Bacteriol.">
        <title>Molecular organization of intrinsic restriction and modification genes BsuM of Bacillus subtilis Marburg.</title>
        <authorList>
            <person name="Ohshima H."/>
            <person name="Matsuoka S."/>
            <person name="Asai K."/>
            <person name="Sadaie Y."/>
        </authorList>
    </citation>
    <scope>FUNCTION</scope>
    <scope>DEVELOPMENTAL STAGE</scope>
    <scope>INDUCTION</scope>
    <scope>OPERON STRUCTURE</scope>
    <scope>DISRUPTION PHENOTYPE</scope>
    <source>
        <strain>168 / Marburg / ATCC 6051 / DSM 10 / JCM 1465 / NBRC 13719 / NCIMB 3610 / NRRL NRS-744 / VKM B-501</strain>
    </source>
</reference>
<reference key="6">
    <citation type="journal article" date="2003" name="Nucleic Acids Res.">
        <title>A nomenclature for restriction enzymes, DNA methyltransferases, homing endonucleases and their genes.</title>
        <authorList>
            <person name="Roberts R.J."/>
            <person name="Belfort M."/>
            <person name="Bestor T."/>
            <person name="Bhagwat A.S."/>
            <person name="Bickle T.A."/>
            <person name="Bitinaite J."/>
            <person name="Blumenthal R.M."/>
            <person name="Degtyarev S.K."/>
            <person name="Dryden D.T."/>
            <person name="Dybvig K."/>
            <person name="Firman K."/>
            <person name="Gromova E.S."/>
            <person name="Gumport R.I."/>
            <person name="Halford S.E."/>
            <person name="Hattman S."/>
            <person name="Heitman J."/>
            <person name="Hornby D.P."/>
            <person name="Janulaitis A."/>
            <person name="Jeltsch A."/>
            <person name="Josephsen J."/>
            <person name="Kiss A."/>
            <person name="Klaenhammer T.R."/>
            <person name="Kobayashi I."/>
            <person name="Kong H."/>
            <person name="Krueger D.H."/>
            <person name="Lacks S."/>
            <person name="Marinus M.G."/>
            <person name="Miyahara M."/>
            <person name="Morgan R.D."/>
            <person name="Murray N.E."/>
            <person name="Nagaraja V."/>
            <person name="Piekarowicz A."/>
            <person name="Pingoud A."/>
            <person name="Raleigh E."/>
            <person name="Rao D.N."/>
            <person name="Reich N."/>
            <person name="Repin V.E."/>
            <person name="Selker E.U."/>
            <person name="Shaw P.C."/>
            <person name="Stein D.C."/>
            <person name="Stoddard B.L."/>
            <person name="Szybalski W."/>
            <person name="Trautner T.A."/>
            <person name="Van Etten J.L."/>
            <person name="Vitor J.M."/>
            <person name="Wilson G.G."/>
            <person name="Xu S.Y."/>
        </authorList>
    </citation>
    <scope>NOMENCLATURE</scope>
</reference>
<reference key="7">
    <citation type="journal article" date="2020" name="Nucleic Acids Res.">
        <title>Methyltransferase DnmA is responsible for genome-wide N6-methyladenosine modifications at non-palindromic recognition sites in Bacillus subtilis.</title>
        <authorList>
            <person name="Nye T.M."/>
            <person name="van Gijtenbeek L.A."/>
            <person name="Stevens A.G."/>
            <person name="Schroeder J.W."/>
            <person name="Randall J.R."/>
            <person name="Matthews L.A."/>
            <person name="Simmons L.A."/>
        </authorList>
    </citation>
    <scope>FUNCTION</scope>
    <scope>DISRUPTION PHENOTYPE</scope>
    <source>
        <strain>168 / PY79</strain>
    </source>
</reference>
<protein>
    <recommendedName>
        <fullName evidence="5">Type II methyltransferase M1.BsuMI</fullName>
        <shortName evidence="5">M1.BsuMI</shortName>
        <ecNumber>2.1.1.37</ecNumber>
    </recommendedName>
    <alternativeName>
        <fullName>BsuMI modification methylase subunit YdiO</fullName>
    </alternativeName>
    <alternativeName>
        <fullName>Cytosine-specific methyltransferase M1.BsuMI</fullName>
    </alternativeName>
</protein>
<gene>
    <name type="primary">ydiO</name>
    <name type="ordered locus">BSU06060</name>
</gene>
<proteinExistence type="evidence at protein level"/>
<comment type="function">
    <text evidence="2 3 4">A methylase, recognizes the double-stranded sequence 5'-YTCGAR-3', methylates C-3 on both strands, and protects the DNA from cleavage by the BsuMI endonuclease.</text>
</comment>
<comment type="catalytic activity">
    <reaction>
        <text>a 2'-deoxycytidine in DNA + S-adenosyl-L-methionine = a 5-methyl-2'-deoxycytidine in DNA + S-adenosyl-L-homocysteine + H(+)</text>
        <dbReference type="Rhea" id="RHEA:13681"/>
        <dbReference type="Rhea" id="RHEA-COMP:11369"/>
        <dbReference type="Rhea" id="RHEA-COMP:11370"/>
        <dbReference type="ChEBI" id="CHEBI:15378"/>
        <dbReference type="ChEBI" id="CHEBI:57856"/>
        <dbReference type="ChEBI" id="CHEBI:59789"/>
        <dbReference type="ChEBI" id="CHEBI:85452"/>
        <dbReference type="ChEBI" id="CHEBI:85454"/>
        <dbReference type="EC" id="2.1.1.37"/>
    </reaction>
</comment>
<comment type="activity regulation">
    <text evidence="3">Somewhat inhibited by MgCl(2) and spermidine, strongly inhibited by MnCl(2).</text>
</comment>
<comment type="biophysicochemical properties">
    <kinetics>
        <KM evidence="3">0.6 uM for S-adenosyl-L-methionine</KM>
        <KM evidence="3">3 nM for DNA</KM>
    </kinetics>
    <phDependence>
        <text evidence="3">Optimum pH is 8.0.</text>
    </phDependence>
    <temperatureDependence>
        <text evidence="3">Rapidly loses activity at 37 degrees Celsius in the absence of DNA.</text>
    </temperatureDependence>
</comment>
<comment type="subunit">
    <text evidence="3 6">Monomer (PubMed:3150363). May form a complex with YdiP, also seems to be active alone (Probable).</text>
</comment>
<comment type="developmental stage">
    <text evidence="2">Not expressed during sporulation.</text>
</comment>
<comment type="induction">
    <text evidence="2">Constitutively expressed during exponential growth. Encoded in an operon with ydiP and in a second with groES, groEL, ydiM and ydiN. This second operon is heat-inducible.</text>
</comment>
<comment type="disruption phenotype">
    <text evidence="2 4">Essential for growth, it can be disrupted once one of the components of the corresponding BsuMI restriction endonuclease complex (AC O34303, O34885, O35025, YdjA, YdiS and YdiR respectively) has been disrupted (PubMed:11751814). Triple deletions ydiO-ydiP-ydiR, ydiO-ydiP-ydiS and ydiO-ydiP-ydjA lead to loss of susceptibility to MspJI, which only digests C-methylated DNA (PubMed:32324221).</text>
</comment>
<comment type="similarity">
    <text evidence="1">Belongs to the class I-like SAM-binding methyltransferase superfamily. C5-methyltransferase family.</text>
</comment>
<comment type="caution">
    <text evidence="7">The characterized enzyme was reported to be a monomer of approximately 45 kDa; it is not clear whether this corresponds to YdiO, YdiP or to another activity altogether.</text>
</comment>
<feature type="chain" id="PRO_0000379884" description="Type II methyltransferase M1.BsuMI">
    <location>
        <begin position="1"/>
        <end position="427"/>
    </location>
</feature>
<feature type="domain" description="SAM-dependent MTase C5-type" evidence="1">
    <location>
        <begin position="84"/>
        <end position="427"/>
    </location>
</feature>
<feature type="active site" evidence="1">
    <location>
        <position position="176"/>
    </location>
</feature>